<accession>O33369</accession>
<feature type="chain" id="PRO_0000066373" description="Uncharacterized protein ORF2">
    <location>
        <begin position="1" status="less than"/>
        <end position="417"/>
    </location>
</feature>
<feature type="transmembrane region" description="Helical" evidence="1">
    <location>
        <begin position="87"/>
        <end position="107"/>
    </location>
</feature>
<feature type="transmembrane region" description="Helical" evidence="1">
    <location>
        <begin position="130"/>
        <end position="150"/>
    </location>
</feature>
<feature type="transmembrane region" description="Helical" evidence="1">
    <location>
        <begin position="177"/>
        <end position="197"/>
    </location>
</feature>
<feature type="transmembrane region" description="Helical" evidence="1">
    <location>
        <begin position="202"/>
        <end position="222"/>
    </location>
</feature>
<feature type="region of interest" description="Disordered" evidence="2">
    <location>
        <begin position="366"/>
        <end position="417"/>
    </location>
</feature>
<feature type="compositionally biased region" description="Low complexity" evidence="2">
    <location>
        <begin position="366"/>
        <end position="398"/>
    </location>
</feature>
<feature type="non-terminal residue">
    <location>
        <position position="1"/>
    </location>
</feature>
<protein>
    <recommendedName>
        <fullName>Uncharacterized protein ORF2</fullName>
    </recommendedName>
</protein>
<comment type="subcellular location">
    <subcellularLocation>
        <location evidence="3">Cell membrane</location>
        <topology evidence="3">Multi-pass membrane protein</topology>
    </subcellularLocation>
</comment>
<comment type="similarity">
    <text evidence="3">Belongs to the YccS/YhfK family.</text>
</comment>
<organism>
    <name type="scientific">Neisseria gonorrhoeae</name>
    <dbReference type="NCBI Taxonomy" id="485"/>
    <lineage>
        <taxon>Bacteria</taxon>
        <taxon>Pseudomonadati</taxon>
        <taxon>Pseudomonadota</taxon>
        <taxon>Betaproteobacteria</taxon>
        <taxon>Neisseriales</taxon>
        <taxon>Neisseriaceae</taxon>
        <taxon>Neisseria</taxon>
    </lineage>
</organism>
<proteinExistence type="inferred from homology"/>
<evidence type="ECO:0000255" key="1"/>
<evidence type="ECO:0000256" key="2">
    <source>
        <dbReference type="SAM" id="MobiDB-lite"/>
    </source>
</evidence>
<evidence type="ECO:0000305" key="3"/>
<keyword id="KW-1003">Cell membrane</keyword>
<keyword id="KW-0472">Membrane</keyword>
<keyword id="KW-0812">Transmembrane</keyword>
<keyword id="KW-1133">Transmembrane helix</keyword>
<reference key="1">
    <citation type="submission" date="1997-10" db="EMBL/GenBank/DDBJ databases">
        <authorList>
            <person name="Kallstrom H."/>
            <person name="Jonsson A.-B."/>
        </authorList>
    </citation>
    <scope>NUCLEOTIDE SEQUENCE [GENOMIC DNA]</scope>
    <source>
        <strain>MS11</strain>
    </source>
</reference>
<sequence>RQSLRLLSDGNDSXDIRHLSRLLDNLGSVDQQFRQLRHSDSPAENDRMGDTRIAALETGSFKNTWQAIRPQLNLESGVFRHAVRLSLVVAAACTIVEALNLNLGYWILLTRLFVCQPNYTATKSRVYQRIAGTVLGVIVGSLVPYFTPSVETKLWIVIAGTTLFFMTRTYKYSFSTFFITIQALTSLSLAGLDVYAAMPVRIIDTIIGASLAWAAVSYLWPDWKYLTLERTAALAVCSSGTYLQKIAERLKTGETGDDIEYRITRRRAHEHTAALSSTLSDMSSEPAKFADTCNPALPCSKPATALTGYISALGHTAAKCTKNAAPTLPHSSTLPPNTPPTSSNTCPTWDPTTFRRHWIHCAANSAPSAPAAAEHKATSSSNSSNSSPGSSNPTTAPTDKFRTGSPKTQPEKISAFW</sequence>
<dbReference type="EMBL" id="AJ002423">
    <property type="protein sequence ID" value="CAA05408.1"/>
    <property type="molecule type" value="Genomic_DNA"/>
</dbReference>
<dbReference type="GO" id="GO:0005886">
    <property type="term" value="C:plasma membrane"/>
    <property type="evidence" value="ECO:0007669"/>
    <property type="project" value="UniProtKB-SubCell"/>
</dbReference>
<dbReference type="InterPro" id="IPR049453">
    <property type="entry name" value="Memb_transporter_dom"/>
</dbReference>
<dbReference type="PANTHER" id="PTHR30509:SF8">
    <property type="entry name" value="INNER MEMBRANE PROTEIN YCCS"/>
    <property type="match status" value="1"/>
</dbReference>
<dbReference type="PANTHER" id="PTHR30509">
    <property type="entry name" value="P-HYDROXYBENZOIC ACID EFFLUX PUMP SUBUNIT-RELATED"/>
    <property type="match status" value="1"/>
</dbReference>
<dbReference type="Pfam" id="PF13515">
    <property type="entry name" value="FUSC_2"/>
    <property type="match status" value="1"/>
</dbReference>
<name>YOR2_NEIGO</name>